<feature type="chain" id="PRO_0000049104" description="Homeobox protein MSX-3">
    <location>
        <begin position="1"/>
        <end position="204"/>
    </location>
</feature>
<feature type="DNA-binding region" description="Homeobox" evidence="1">
    <location>
        <begin position="87"/>
        <end position="146"/>
    </location>
</feature>
<feature type="region of interest" description="Disordered" evidence="2">
    <location>
        <begin position="39"/>
        <end position="89"/>
    </location>
</feature>
<feature type="compositionally biased region" description="Pro residues" evidence="2">
    <location>
        <begin position="60"/>
        <end position="79"/>
    </location>
</feature>
<feature type="sequence conflict" description="In Ref. 4; CAA65367." evidence="6" ref="4">
    <original>S</original>
    <variation>I</variation>
    <location>
        <position position="75"/>
    </location>
</feature>
<accession>P70354</accession>
<accession>P70246</accession>
<accession>Q03360</accession>
<accession>Q80W10</accession>
<protein>
    <recommendedName>
        <fullName>Homeobox protein MSX-3</fullName>
    </recommendedName>
</protein>
<name>MSX3_MOUSE</name>
<reference key="1">
    <citation type="journal article" date="1996" name="Mech. Dev.">
        <title>Msx3: a novel murine homologue of the Drosophila msh homeobox gene restricted to the dorsal embryonic central nervous system.</title>
        <authorList>
            <person name="Wang W."/>
            <person name="Chen X."/>
            <person name="Xu H."/>
            <person name="Lufkin T."/>
        </authorList>
    </citation>
    <scope>NUCLEOTIDE SEQUENCE [MRNA]</scope>
    <scope>TISSUE SPECIFICITY</scope>
</reference>
<reference key="2">
    <citation type="submission" date="1998-04" db="EMBL/GenBank/DDBJ databases">
        <title>The mechanism of biogenesis, developmental regulation and potential function of the two alternatively spliced mRNAs encoded by the murine Msx3 gene.</title>
        <authorList>
            <person name="Matsui H."/>
            <person name="Takahashi T."/>
            <person name="Raghow R."/>
        </authorList>
    </citation>
    <scope>NUCLEOTIDE SEQUENCE</scope>
    <source>
        <strain>FVB/NHSD</strain>
    </source>
</reference>
<reference key="3">
    <citation type="journal article" date="2004" name="Genome Res.">
        <title>The status, quality, and expansion of the NIH full-length cDNA project: the Mammalian Gene Collection (MGC).</title>
        <authorList>
            <consortium name="The MGC Project Team"/>
        </authorList>
    </citation>
    <scope>NUCLEOTIDE SEQUENCE [LARGE SCALE MRNA]</scope>
    <source>
        <strain>C57BL/6J</strain>
        <tissue>Brain</tissue>
    </source>
</reference>
<reference key="4">
    <citation type="journal article" date="1996" name="Mech. Dev.">
        <title>The murine homeobox gene Msx-3 shows highly restricted expression in the developing neural tube.</title>
        <authorList>
            <person name="Shimeld S.M."/>
            <person name="McKay I.J."/>
            <person name="Sharpe P.T."/>
        </authorList>
    </citation>
    <scope>NUCLEOTIDE SEQUENCE [GENOMIC DNA] OF 73-204</scope>
</reference>
<reference key="5">
    <citation type="journal article" date="1991" name="Gene">
        <title>Cloning and evolutionary analysis of msh-like homeobox genes from mouse, zebrafish and ascidian.</title>
        <authorList>
            <person name="Holland P.W.H."/>
        </authorList>
    </citation>
    <scope>NUCLEOTIDE SEQUENCE [GENOMIC DNA] OF 86-146</scope>
    <source>
        <strain>DBA</strain>
        <tissue>Liver</tissue>
    </source>
</reference>
<reference key="6">
    <citation type="journal article" date="1999" name="Biochem. J.">
        <title>Transcriptional autorepression of Msx1 gene is mediated by interactions of Msx1 protein with a multi-protein transcriptional complex containing TATA-binding protein, Sp1 and cAMP-response-element-binding protein-binding protein (CBP/p300).</title>
        <authorList>
            <person name="Shetty S."/>
            <person name="Takahashi T."/>
            <person name="Matsui H."/>
            <person name="Ayengar R."/>
            <person name="Raghow R."/>
        </authorList>
    </citation>
    <scope>INTERACTION WITH CREBBP; TBP AND SP1</scope>
</reference>
<reference key="7">
    <citation type="journal article" date="2001" name="Biochem. J.">
        <title>Msx3 protein recruits histone deacetylase to down-regulate the Msx1 promoter.</title>
        <authorList>
            <person name="Mehra-Chaudhary R."/>
            <person name="Matsui H."/>
            <person name="Raghow R."/>
        </authorList>
    </citation>
    <scope>FUNCTION</scope>
    <scope>IDENTIFICATION IN A COMPLEX WITH CREBBP AND EP300</scope>
    <scope>INTERACTION WITH HDAC1; CREBBP AND NOTCH</scope>
    <scope>SUBCELLULAR LOCATION</scope>
    <source>
        <tissue>Muscle</tissue>
    </source>
</reference>
<evidence type="ECO:0000255" key="1">
    <source>
        <dbReference type="PROSITE-ProRule" id="PRU00108"/>
    </source>
</evidence>
<evidence type="ECO:0000256" key="2">
    <source>
        <dbReference type="SAM" id="MobiDB-lite"/>
    </source>
</evidence>
<evidence type="ECO:0000269" key="3">
    <source>
    </source>
</evidence>
<evidence type="ECO:0000269" key="4">
    <source>
    </source>
</evidence>
<evidence type="ECO:0000269" key="5">
    <source>
    </source>
</evidence>
<evidence type="ECO:0000305" key="6"/>
<keyword id="KW-0217">Developmental protein</keyword>
<keyword id="KW-0238">DNA-binding</keyword>
<keyword id="KW-0371">Homeobox</keyword>
<keyword id="KW-0539">Nucleus</keyword>
<keyword id="KW-1185">Reference proteome</keyword>
<keyword id="KW-0678">Repressor</keyword>
<keyword id="KW-0804">Transcription</keyword>
<keyword id="KW-0805">Transcription regulation</keyword>
<gene>
    <name type="primary">Msx3</name>
    <name type="synonym">Msx-3</name>
</gene>
<organism>
    <name type="scientific">Mus musculus</name>
    <name type="common">Mouse</name>
    <dbReference type="NCBI Taxonomy" id="10090"/>
    <lineage>
        <taxon>Eukaryota</taxon>
        <taxon>Metazoa</taxon>
        <taxon>Chordata</taxon>
        <taxon>Craniata</taxon>
        <taxon>Vertebrata</taxon>
        <taxon>Euteleostomi</taxon>
        <taxon>Mammalia</taxon>
        <taxon>Eutheria</taxon>
        <taxon>Euarchontoglires</taxon>
        <taxon>Glires</taxon>
        <taxon>Rodentia</taxon>
        <taxon>Myomorpha</taxon>
        <taxon>Muroidea</taxon>
        <taxon>Muridae</taxon>
        <taxon>Murinae</taxon>
        <taxon>Mus</taxon>
        <taxon>Mus</taxon>
    </lineage>
</organism>
<comment type="function">
    <text evidence="4">Acts as a potent transcriptional repressor of MSX1.</text>
</comment>
<comment type="subunit">
    <text evidence="3 4">Part of a complex composed of MSX3, CREBBP/CBP AND EP300/p300; the interaction with MSX3 decreases histone acetylation activity (PubMed:11115394). Interacts with HDAC1 (PubMed:11115394). Interacts with CREBBP/CBP, TBP and SP1 (PubMed:10215616).</text>
</comment>
<comment type="subcellular location">
    <subcellularLocation>
        <location evidence="1 4">Nucleus</location>
    </subcellularLocation>
</comment>
<comment type="tissue specificity">
    <text evidence="5">Restricted to the dorsal embryonic central nervous system.</text>
</comment>
<comment type="similarity">
    <text evidence="6">Belongs to the Msh homeobox family.</text>
</comment>
<comment type="sequence caution" evidence="6">
    <conflict type="erroneous initiation">
        <sequence resource="EMBL-CDS" id="AAH51983"/>
    </conflict>
</comment>
<dbReference type="EMBL" id="U62523">
    <property type="protein sequence ID" value="AAB49935.1"/>
    <property type="molecule type" value="mRNA"/>
</dbReference>
<dbReference type="EMBL" id="AF060229">
    <property type="protein sequence ID" value="AAC15459.1"/>
    <property type="molecule type" value="Genomic_DNA"/>
</dbReference>
<dbReference type="EMBL" id="BC051983">
    <property type="protein sequence ID" value="AAH51983.1"/>
    <property type="status" value="ALT_INIT"/>
    <property type="molecule type" value="mRNA"/>
</dbReference>
<dbReference type="EMBL" id="X96518">
    <property type="protein sequence ID" value="CAA65367.1"/>
    <property type="molecule type" value="Genomic_DNA"/>
</dbReference>
<dbReference type="EMBL" id="M38577">
    <property type="protein sequence ID" value="AAA37825.1"/>
    <property type="molecule type" value="Genomic_DNA"/>
</dbReference>
<dbReference type="CCDS" id="CCDS21961.1"/>
<dbReference type="PIR" id="PS0409">
    <property type="entry name" value="PS0409"/>
</dbReference>
<dbReference type="RefSeq" id="NP_034966.1">
    <property type="nucleotide sequence ID" value="NM_010836.3"/>
</dbReference>
<dbReference type="SMR" id="P70354"/>
<dbReference type="BioGRID" id="201538">
    <property type="interactions" value="1"/>
</dbReference>
<dbReference type="FunCoup" id="P70354">
    <property type="interactions" value="403"/>
</dbReference>
<dbReference type="STRING" id="10090.ENSMUSP00000133484"/>
<dbReference type="PaxDb" id="10090-ENSMUSP00000133484"/>
<dbReference type="ProteomicsDB" id="290210"/>
<dbReference type="DNASU" id="17703"/>
<dbReference type="Ensembl" id="ENSMUST00000172775.4">
    <property type="protein sequence ID" value="ENSMUSP00000133484.2"/>
    <property type="gene ID" value="ENSMUSG00000025469.11"/>
</dbReference>
<dbReference type="GeneID" id="17703"/>
<dbReference type="KEGG" id="mmu:17703"/>
<dbReference type="UCSC" id="uc012fwf.1">
    <property type="organism name" value="mouse"/>
</dbReference>
<dbReference type="AGR" id="MGI:106587"/>
<dbReference type="CTD" id="17703"/>
<dbReference type="MGI" id="MGI:106587">
    <property type="gene designation" value="Msx3"/>
</dbReference>
<dbReference type="VEuPathDB" id="HostDB:ENSMUSG00000025469"/>
<dbReference type="eggNOG" id="KOG0492">
    <property type="taxonomic scope" value="Eukaryota"/>
</dbReference>
<dbReference type="GeneTree" id="ENSGT00940000164040"/>
<dbReference type="HOGENOM" id="CLU_072675_3_1_1"/>
<dbReference type="InParanoid" id="P70354"/>
<dbReference type="OMA" id="AYGVYYL"/>
<dbReference type="OrthoDB" id="6159439at2759"/>
<dbReference type="PhylomeDB" id="P70354"/>
<dbReference type="TreeFam" id="TF350699"/>
<dbReference type="BioGRID-ORCS" id="17703">
    <property type="hits" value="0 hits in 76 CRISPR screens"/>
</dbReference>
<dbReference type="PRO" id="PR:P70354"/>
<dbReference type="Proteomes" id="UP000000589">
    <property type="component" value="Chromosome 7"/>
</dbReference>
<dbReference type="RNAct" id="P70354">
    <property type="molecule type" value="protein"/>
</dbReference>
<dbReference type="Bgee" id="ENSMUSG00000025469">
    <property type="expression patterns" value="Expressed in future spinal cord and 36 other cell types or tissues"/>
</dbReference>
<dbReference type="ExpressionAtlas" id="P70354">
    <property type="expression patterns" value="baseline and differential"/>
</dbReference>
<dbReference type="GO" id="GO:0005634">
    <property type="term" value="C:nucleus"/>
    <property type="evidence" value="ECO:0000314"/>
    <property type="project" value="MGI"/>
</dbReference>
<dbReference type="GO" id="GO:0003677">
    <property type="term" value="F:DNA binding"/>
    <property type="evidence" value="ECO:0007669"/>
    <property type="project" value="UniProtKB-KW"/>
</dbReference>
<dbReference type="GO" id="GO:0000981">
    <property type="term" value="F:DNA-binding transcription factor activity, RNA polymerase II-specific"/>
    <property type="evidence" value="ECO:0007669"/>
    <property type="project" value="InterPro"/>
</dbReference>
<dbReference type="GO" id="GO:0035035">
    <property type="term" value="F:histone acetyltransferase binding"/>
    <property type="evidence" value="ECO:0000353"/>
    <property type="project" value="MGI"/>
</dbReference>
<dbReference type="GO" id="GO:0035034">
    <property type="term" value="F:histone acetyltransferase regulator activity"/>
    <property type="evidence" value="ECO:0000314"/>
    <property type="project" value="MGI"/>
</dbReference>
<dbReference type="GO" id="GO:0000122">
    <property type="term" value="P:negative regulation of transcription by RNA polymerase II"/>
    <property type="evidence" value="ECO:0000314"/>
    <property type="project" value="MGI"/>
</dbReference>
<dbReference type="GO" id="GO:0006357">
    <property type="term" value="P:regulation of transcription by RNA polymerase II"/>
    <property type="evidence" value="ECO:0000314"/>
    <property type="project" value="MGI"/>
</dbReference>
<dbReference type="CDD" id="cd00086">
    <property type="entry name" value="homeodomain"/>
    <property type="match status" value="1"/>
</dbReference>
<dbReference type="FunFam" id="1.10.10.60:FF:000271">
    <property type="entry name" value="Homeobox protein MSX-2"/>
    <property type="match status" value="1"/>
</dbReference>
<dbReference type="Gene3D" id="1.10.10.60">
    <property type="entry name" value="Homeodomain-like"/>
    <property type="match status" value="1"/>
</dbReference>
<dbReference type="InterPro" id="IPR001356">
    <property type="entry name" value="HD"/>
</dbReference>
<dbReference type="InterPro" id="IPR020479">
    <property type="entry name" value="HD_metazoa"/>
</dbReference>
<dbReference type="InterPro" id="IPR017970">
    <property type="entry name" value="Homeobox_CS"/>
</dbReference>
<dbReference type="InterPro" id="IPR009057">
    <property type="entry name" value="Homeodomain-like_sf"/>
</dbReference>
<dbReference type="InterPro" id="IPR000047">
    <property type="entry name" value="HTH_motif"/>
</dbReference>
<dbReference type="InterPro" id="IPR050674">
    <property type="entry name" value="Msh_Homeobox_Regulators"/>
</dbReference>
<dbReference type="PANTHER" id="PTHR24338">
    <property type="entry name" value="HOMEOBOX PROTEIN MSX"/>
    <property type="match status" value="1"/>
</dbReference>
<dbReference type="PANTHER" id="PTHR24338:SF9">
    <property type="entry name" value="HOMEOBOX PROTEIN MSX-3"/>
    <property type="match status" value="1"/>
</dbReference>
<dbReference type="Pfam" id="PF00046">
    <property type="entry name" value="Homeodomain"/>
    <property type="match status" value="1"/>
</dbReference>
<dbReference type="PRINTS" id="PR00024">
    <property type="entry name" value="HOMEOBOX"/>
</dbReference>
<dbReference type="PRINTS" id="PR00031">
    <property type="entry name" value="HTHREPRESSR"/>
</dbReference>
<dbReference type="SMART" id="SM00389">
    <property type="entry name" value="HOX"/>
    <property type="match status" value="1"/>
</dbReference>
<dbReference type="SUPFAM" id="SSF46689">
    <property type="entry name" value="Homeodomain-like"/>
    <property type="match status" value="1"/>
</dbReference>
<dbReference type="PROSITE" id="PS00027">
    <property type="entry name" value="HOMEOBOX_1"/>
    <property type="match status" value="1"/>
</dbReference>
<dbReference type="PROSITE" id="PS50071">
    <property type="entry name" value="HOMEOBOX_2"/>
    <property type="match status" value="1"/>
</dbReference>
<proteinExistence type="evidence at protein level"/>
<sequence length="204" mass="21971">MARATFDMNAAGLEARGGGHTEHGPLPFSVESLLEAERVPGSESGELGVERPLGASKPGAWPPPVAHSCPPRAPSPPPCTLRKHKTNRKPRTPFTTAQLLALERKFHQKQYLSIAERAEFSSSLSLTETQVKIWFQNRRAKAKRLQEAELEKLKLAAKPLLPAAFALPFPLGTQLHSSAATFGGNAVPGILAGPVAAYGMYYLS</sequence>